<gene>
    <name evidence="1" type="primary">lipB</name>
    <name type="ordered locus">AHA_3261</name>
</gene>
<dbReference type="EC" id="2.3.1.181" evidence="1"/>
<dbReference type="EMBL" id="CP000462">
    <property type="protein sequence ID" value="ABK39323.1"/>
    <property type="molecule type" value="Genomic_DNA"/>
</dbReference>
<dbReference type="RefSeq" id="WP_011707033.1">
    <property type="nucleotide sequence ID" value="NC_008570.1"/>
</dbReference>
<dbReference type="RefSeq" id="YP_857752.1">
    <property type="nucleotide sequence ID" value="NC_008570.1"/>
</dbReference>
<dbReference type="SMR" id="A0KNA1"/>
<dbReference type="STRING" id="380703.AHA_3261"/>
<dbReference type="EnsemblBacteria" id="ABK39323">
    <property type="protein sequence ID" value="ABK39323"/>
    <property type="gene ID" value="AHA_3261"/>
</dbReference>
<dbReference type="GeneID" id="4488839"/>
<dbReference type="KEGG" id="aha:AHA_3261"/>
<dbReference type="PATRIC" id="fig|380703.7.peg.3256"/>
<dbReference type="eggNOG" id="COG0321">
    <property type="taxonomic scope" value="Bacteria"/>
</dbReference>
<dbReference type="HOGENOM" id="CLU_035168_3_1_6"/>
<dbReference type="OrthoDB" id="9787061at2"/>
<dbReference type="UniPathway" id="UPA00538">
    <property type="reaction ID" value="UER00592"/>
</dbReference>
<dbReference type="Proteomes" id="UP000000756">
    <property type="component" value="Chromosome"/>
</dbReference>
<dbReference type="GO" id="GO:0005737">
    <property type="term" value="C:cytoplasm"/>
    <property type="evidence" value="ECO:0007669"/>
    <property type="project" value="UniProtKB-SubCell"/>
</dbReference>
<dbReference type="GO" id="GO:0033819">
    <property type="term" value="F:lipoyl(octanoyl) transferase activity"/>
    <property type="evidence" value="ECO:0007669"/>
    <property type="project" value="UniProtKB-EC"/>
</dbReference>
<dbReference type="GO" id="GO:0036211">
    <property type="term" value="P:protein modification process"/>
    <property type="evidence" value="ECO:0007669"/>
    <property type="project" value="InterPro"/>
</dbReference>
<dbReference type="CDD" id="cd16444">
    <property type="entry name" value="LipB"/>
    <property type="match status" value="1"/>
</dbReference>
<dbReference type="FunFam" id="3.30.930.10:FF:000020">
    <property type="entry name" value="Octanoyltransferase"/>
    <property type="match status" value="1"/>
</dbReference>
<dbReference type="Gene3D" id="3.30.930.10">
    <property type="entry name" value="Bira Bifunctional Protein, Domain 2"/>
    <property type="match status" value="1"/>
</dbReference>
<dbReference type="HAMAP" id="MF_00013">
    <property type="entry name" value="LipB"/>
    <property type="match status" value="1"/>
</dbReference>
<dbReference type="InterPro" id="IPR045864">
    <property type="entry name" value="aa-tRNA-synth_II/BPL/LPL"/>
</dbReference>
<dbReference type="InterPro" id="IPR004143">
    <property type="entry name" value="BPL_LPL_catalytic"/>
</dbReference>
<dbReference type="InterPro" id="IPR000544">
    <property type="entry name" value="Octanoyltransferase"/>
</dbReference>
<dbReference type="InterPro" id="IPR020605">
    <property type="entry name" value="Octanoyltransferase_CS"/>
</dbReference>
<dbReference type="NCBIfam" id="TIGR00214">
    <property type="entry name" value="lipB"/>
    <property type="match status" value="1"/>
</dbReference>
<dbReference type="NCBIfam" id="NF010922">
    <property type="entry name" value="PRK14342.1"/>
    <property type="match status" value="1"/>
</dbReference>
<dbReference type="PANTHER" id="PTHR10993:SF7">
    <property type="entry name" value="LIPOYLTRANSFERASE 2, MITOCHONDRIAL-RELATED"/>
    <property type="match status" value="1"/>
</dbReference>
<dbReference type="PANTHER" id="PTHR10993">
    <property type="entry name" value="OCTANOYLTRANSFERASE"/>
    <property type="match status" value="1"/>
</dbReference>
<dbReference type="Pfam" id="PF21948">
    <property type="entry name" value="LplA-B_cat"/>
    <property type="match status" value="1"/>
</dbReference>
<dbReference type="PIRSF" id="PIRSF016262">
    <property type="entry name" value="LPLase"/>
    <property type="match status" value="1"/>
</dbReference>
<dbReference type="SUPFAM" id="SSF55681">
    <property type="entry name" value="Class II aaRS and biotin synthetases"/>
    <property type="match status" value="1"/>
</dbReference>
<dbReference type="PROSITE" id="PS51733">
    <property type="entry name" value="BPL_LPL_CATALYTIC"/>
    <property type="match status" value="1"/>
</dbReference>
<dbReference type="PROSITE" id="PS01313">
    <property type="entry name" value="LIPB"/>
    <property type="match status" value="1"/>
</dbReference>
<comment type="function">
    <text evidence="1">Catalyzes the transfer of endogenously produced octanoic acid from octanoyl-acyl-carrier-protein onto the lipoyl domains of lipoate-dependent enzymes. Lipoyl-ACP can also act as a substrate although octanoyl-ACP is likely to be the physiological substrate.</text>
</comment>
<comment type="catalytic activity">
    <reaction evidence="1">
        <text>octanoyl-[ACP] + L-lysyl-[protein] = N(6)-octanoyl-L-lysyl-[protein] + holo-[ACP] + H(+)</text>
        <dbReference type="Rhea" id="RHEA:17665"/>
        <dbReference type="Rhea" id="RHEA-COMP:9636"/>
        <dbReference type="Rhea" id="RHEA-COMP:9685"/>
        <dbReference type="Rhea" id="RHEA-COMP:9752"/>
        <dbReference type="Rhea" id="RHEA-COMP:9928"/>
        <dbReference type="ChEBI" id="CHEBI:15378"/>
        <dbReference type="ChEBI" id="CHEBI:29969"/>
        <dbReference type="ChEBI" id="CHEBI:64479"/>
        <dbReference type="ChEBI" id="CHEBI:78463"/>
        <dbReference type="ChEBI" id="CHEBI:78809"/>
        <dbReference type="EC" id="2.3.1.181"/>
    </reaction>
</comment>
<comment type="pathway">
    <text evidence="1">Protein modification; protein lipoylation via endogenous pathway; protein N(6)-(lipoyl)lysine from octanoyl-[acyl-carrier-protein]: step 1/2.</text>
</comment>
<comment type="subcellular location">
    <subcellularLocation>
        <location evidence="1">Cytoplasm</location>
    </subcellularLocation>
</comment>
<comment type="miscellaneous">
    <text evidence="1">In the reaction, the free carboxyl group of octanoic acid is attached via an amide linkage to the epsilon-amino group of a specific lysine residue of lipoyl domains of lipoate-dependent enzymes.</text>
</comment>
<comment type="similarity">
    <text evidence="1">Belongs to the LipB family.</text>
</comment>
<protein>
    <recommendedName>
        <fullName evidence="1">Octanoyltransferase</fullName>
        <ecNumber evidence="1">2.3.1.181</ecNumber>
    </recommendedName>
    <alternativeName>
        <fullName evidence="1">Lipoate-protein ligase B</fullName>
    </alternativeName>
    <alternativeName>
        <fullName evidence="1">Lipoyl/octanoyl transferase</fullName>
    </alternativeName>
    <alternativeName>
        <fullName evidence="1">Octanoyl-[acyl-carrier-protein]-protein N-octanoyltransferase</fullName>
    </alternativeName>
</protein>
<evidence type="ECO:0000255" key="1">
    <source>
        <dbReference type="HAMAP-Rule" id="MF_00013"/>
    </source>
</evidence>
<evidence type="ECO:0000255" key="2">
    <source>
        <dbReference type="PROSITE-ProRule" id="PRU01067"/>
    </source>
</evidence>
<reference key="1">
    <citation type="journal article" date="2006" name="J. Bacteriol.">
        <title>Genome sequence of Aeromonas hydrophila ATCC 7966T: jack of all trades.</title>
        <authorList>
            <person name="Seshadri R."/>
            <person name="Joseph S.W."/>
            <person name="Chopra A.K."/>
            <person name="Sha J."/>
            <person name="Shaw J."/>
            <person name="Graf J."/>
            <person name="Haft D.H."/>
            <person name="Wu M."/>
            <person name="Ren Q."/>
            <person name="Rosovitz M.J."/>
            <person name="Madupu R."/>
            <person name="Tallon L."/>
            <person name="Kim M."/>
            <person name="Jin S."/>
            <person name="Vuong H."/>
            <person name="Stine O.C."/>
            <person name="Ali A."/>
            <person name="Horneman A.J."/>
            <person name="Heidelberg J.F."/>
        </authorList>
    </citation>
    <scope>NUCLEOTIDE SEQUENCE [LARGE SCALE GENOMIC DNA]</scope>
    <source>
        <strain>ATCC 7966 / DSM 30187 / BCRC 13018 / CCUG 14551 / JCM 1027 / KCTC 2358 / NCIMB 9240 / NCTC 8049</strain>
    </source>
</reference>
<keyword id="KW-0012">Acyltransferase</keyword>
<keyword id="KW-0963">Cytoplasm</keyword>
<keyword id="KW-1185">Reference proteome</keyword>
<keyword id="KW-0808">Transferase</keyword>
<proteinExistence type="inferred from homology"/>
<sequence>MSLQTPTESPSSAPRLLVRQLGRRPYQPVWDAMKAFTDSRTPDTPDEFWVVEHDPVYTQGQAGKAEHLLAPGDIPVVQSDRGGQVTYHGPGQLVLYVLVDVRRSKLTVRELVTCLETAIINTLAKSGIEAYAKPDAPGVYVKNQLGAALQTEAKLASLGLRIRKGCSFHGLALNVNMDMTPFLRINPCGYAGMAMTQTSALGGPQSVAEAQAMLVAELASLIGYETITNTEEAA</sequence>
<organism>
    <name type="scientific">Aeromonas hydrophila subsp. hydrophila (strain ATCC 7966 / DSM 30187 / BCRC 13018 / CCUG 14551 / JCM 1027 / KCTC 2358 / NCIMB 9240 / NCTC 8049)</name>
    <dbReference type="NCBI Taxonomy" id="380703"/>
    <lineage>
        <taxon>Bacteria</taxon>
        <taxon>Pseudomonadati</taxon>
        <taxon>Pseudomonadota</taxon>
        <taxon>Gammaproteobacteria</taxon>
        <taxon>Aeromonadales</taxon>
        <taxon>Aeromonadaceae</taxon>
        <taxon>Aeromonas</taxon>
    </lineage>
</organism>
<name>LIPB_AERHH</name>
<accession>A0KNA1</accession>
<feature type="chain" id="PRO_0000321619" description="Octanoyltransferase">
    <location>
        <begin position="1"/>
        <end position="234"/>
    </location>
</feature>
<feature type="domain" description="BPL/LPL catalytic" evidence="2">
    <location>
        <begin position="42"/>
        <end position="226"/>
    </location>
</feature>
<feature type="active site" description="Acyl-thioester intermediate" evidence="1">
    <location>
        <position position="188"/>
    </location>
</feature>
<feature type="binding site" evidence="1">
    <location>
        <begin position="81"/>
        <end position="88"/>
    </location>
    <ligand>
        <name>substrate</name>
    </ligand>
</feature>
<feature type="binding site" evidence="1">
    <location>
        <begin position="157"/>
        <end position="159"/>
    </location>
    <ligand>
        <name>substrate</name>
    </ligand>
</feature>
<feature type="binding site" evidence="1">
    <location>
        <begin position="170"/>
        <end position="172"/>
    </location>
    <ligand>
        <name>substrate</name>
    </ligand>
</feature>
<feature type="site" description="Lowers pKa of active site Cys" evidence="1">
    <location>
        <position position="154"/>
    </location>
</feature>